<gene>
    <name evidence="1" type="primary">nikR</name>
    <name type="ordered locus">Ent638_1839</name>
</gene>
<keyword id="KW-0238">DNA-binding</keyword>
<keyword id="KW-0479">Metal-binding</keyword>
<keyword id="KW-0533">Nickel</keyword>
<keyword id="KW-0678">Repressor</keyword>
<keyword id="KW-0804">Transcription</keyword>
<keyword id="KW-0805">Transcription regulation</keyword>
<feature type="chain" id="PRO_1000060406" description="Nickel-responsive regulator">
    <location>
        <begin position="1"/>
        <end position="133"/>
    </location>
</feature>
<feature type="binding site" evidence="1">
    <location>
        <position position="76"/>
    </location>
    <ligand>
        <name>Ni(2+)</name>
        <dbReference type="ChEBI" id="CHEBI:49786"/>
    </ligand>
</feature>
<feature type="binding site" evidence="1">
    <location>
        <position position="87"/>
    </location>
    <ligand>
        <name>Ni(2+)</name>
        <dbReference type="ChEBI" id="CHEBI:49786"/>
    </ligand>
</feature>
<feature type="binding site" evidence="1">
    <location>
        <position position="89"/>
    </location>
    <ligand>
        <name>Ni(2+)</name>
        <dbReference type="ChEBI" id="CHEBI:49786"/>
    </ligand>
</feature>
<feature type="binding site" evidence="1">
    <location>
        <position position="95"/>
    </location>
    <ligand>
        <name>Ni(2+)</name>
        <dbReference type="ChEBI" id="CHEBI:49786"/>
    </ligand>
</feature>
<name>NIKR_ENT38</name>
<sequence length="133" mass="15107">MQRVTITLDDDLLETLDSLSQRRGYNNRSEAIRDILRGALAQETAQQHGTQGFAVLSYVYEHEKRDLARRLVSTQHHHHDLSVATLHVHVSHEDCLEIAVLKGDMGDIQHFADDVIAQRGVRHGHLQCLPDDE</sequence>
<reference key="1">
    <citation type="journal article" date="2010" name="PLoS Genet.">
        <title>Genome sequence of the plant growth promoting endophytic bacterium Enterobacter sp. 638.</title>
        <authorList>
            <person name="Taghavi S."/>
            <person name="van der Lelie D."/>
            <person name="Hoffman A."/>
            <person name="Zhang Y.B."/>
            <person name="Walla M.D."/>
            <person name="Vangronsveld J."/>
            <person name="Newman L."/>
            <person name="Monchy S."/>
        </authorList>
    </citation>
    <scope>NUCLEOTIDE SEQUENCE [LARGE SCALE GENOMIC DNA]</scope>
    <source>
        <strain>638</strain>
    </source>
</reference>
<comment type="function">
    <text evidence="1">Transcriptional repressor of the nikABCDE operon. Is active in the presence of excessive concentrations of intracellular nickel.</text>
</comment>
<comment type="cofactor">
    <cofactor evidence="1">
        <name>Ni(2+)</name>
        <dbReference type="ChEBI" id="CHEBI:49786"/>
    </cofactor>
    <text evidence="1">Binds 1 nickel ion per subunit.</text>
</comment>
<comment type="subunit">
    <text evidence="1">Homotetramer.</text>
</comment>
<comment type="similarity">
    <text evidence="1">Belongs to the transcriptional regulatory CopG/NikR family.</text>
</comment>
<evidence type="ECO:0000255" key="1">
    <source>
        <dbReference type="HAMAP-Rule" id="MF_00476"/>
    </source>
</evidence>
<dbReference type="EMBL" id="CP000653">
    <property type="protein sequence ID" value="ABP60518.1"/>
    <property type="molecule type" value="Genomic_DNA"/>
</dbReference>
<dbReference type="RefSeq" id="WP_012017233.1">
    <property type="nucleotide sequence ID" value="NC_009436.1"/>
</dbReference>
<dbReference type="SMR" id="A4W9Y8"/>
<dbReference type="STRING" id="399742.Ent638_1839"/>
<dbReference type="KEGG" id="ent:Ent638_1839"/>
<dbReference type="eggNOG" id="COG0864">
    <property type="taxonomic scope" value="Bacteria"/>
</dbReference>
<dbReference type="HOGENOM" id="CLU_113319_1_4_6"/>
<dbReference type="OrthoDB" id="9806294at2"/>
<dbReference type="Proteomes" id="UP000000230">
    <property type="component" value="Chromosome"/>
</dbReference>
<dbReference type="GO" id="GO:0003700">
    <property type="term" value="F:DNA-binding transcription factor activity"/>
    <property type="evidence" value="ECO:0007669"/>
    <property type="project" value="UniProtKB-UniRule"/>
</dbReference>
<dbReference type="GO" id="GO:0016151">
    <property type="term" value="F:nickel cation binding"/>
    <property type="evidence" value="ECO:0007669"/>
    <property type="project" value="UniProtKB-UniRule"/>
</dbReference>
<dbReference type="GO" id="GO:0043565">
    <property type="term" value="F:sequence-specific DNA binding"/>
    <property type="evidence" value="ECO:0007669"/>
    <property type="project" value="UniProtKB-ARBA"/>
</dbReference>
<dbReference type="GO" id="GO:0010045">
    <property type="term" value="P:response to nickel cation"/>
    <property type="evidence" value="ECO:0007669"/>
    <property type="project" value="InterPro"/>
</dbReference>
<dbReference type="CDD" id="cd22231">
    <property type="entry name" value="RHH_NikR_HicB-like"/>
    <property type="match status" value="1"/>
</dbReference>
<dbReference type="FunFam" id="1.10.1220.10:FF:000001">
    <property type="entry name" value="Nickel-responsive regulator"/>
    <property type="match status" value="1"/>
</dbReference>
<dbReference type="FunFam" id="3.30.70.1150:FF:000002">
    <property type="entry name" value="Nickel-responsive regulator"/>
    <property type="match status" value="1"/>
</dbReference>
<dbReference type="Gene3D" id="3.30.70.1150">
    <property type="entry name" value="ACT-like. Chain A, domain 2"/>
    <property type="match status" value="1"/>
</dbReference>
<dbReference type="Gene3D" id="1.10.1220.10">
    <property type="entry name" value="Met repressor-like"/>
    <property type="match status" value="1"/>
</dbReference>
<dbReference type="HAMAP" id="MF_00476">
    <property type="entry name" value="NikR"/>
    <property type="match status" value="1"/>
</dbReference>
<dbReference type="InterPro" id="IPR027271">
    <property type="entry name" value="Acetolactate_synth/TF_NikR_C"/>
</dbReference>
<dbReference type="InterPro" id="IPR045865">
    <property type="entry name" value="ACT-like_dom_sf"/>
</dbReference>
<dbReference type="InterPro" id="IPR013321">
    <property type="entry name" value="Arc_rbn_hlx_hlx"/>
</dbReference>
<dbReference type="InterPro" id="IPR002145">
    <property type="entry name" value="CopG"/>
</dbReference>
<dbReference type="InterPro" id="IPR050192">
    <property type="entry name" value="CopG/NikR_regulator"/>
</dbReference>
<dbReference type="InterPro" id="IPR022988">
    <property type="entry name" value="Ni_resp_reg_NikR"/>
</dbReference>
<dbReference type="InterPro" id="IPR014160">
    <property type="entry name" value="Nickel_NikR_proteobac"/>
</dbReference>
<dbReference type="InterPro" id="IPR010985">
    <property type="entry name" value="Ribbon_hlx_hlx"/>
</dbReference>
<dbReference type="InterPro" id="IPR014864">
    <property type="entry name" value="TF_NikR_Ni-bd_C"/>
</dbReference>
<dbReference type="NCBIfam" id="TIGR02793">
    <property type="entry name" value="nikR"/>
    <property type="match status" value="1"/>
</dbReference>
<dbReference type="NCBIfam" id="NF002815">
    <property type="entry name" value="PRK02967.1"/>
    <property type="match status" value="1"/>
</dbReference>
<dbReference type="NCBIfam" id="NF003381">
    <property type="entry name" value="PRK04460.1"/>
    <property type="match status" value="1"/>
</dbReference>
<dbReference type="PANTHER" id="PTHR34719">
    <property type="entry name" value="NICKEL-RESPONSIVE REGULATOR"/>
    <property type="match status" value="1"/>
</dbReference>
<dbReference type="PANTHER" id="PTHR34719:SF2">
    <property type="entry name" value="NICKEL-RESPONSIVE REGULATOR"/>
    <property type="match status" value="1"/>
</dbReference>
<dbReference type="Pfam" id="PF08753">
    <property type="entry name" value="NikR_C"/>
    <property type="match status" value="1"/>
</dbReference>
<dbReference type="Pfam" id="PF01402">
    <property type="entry name" value="RHH_1"/>
    <property type="match status" value="1"/>
</dbReference>
<dbReference type="SUPFAM" id="SSF55021">
    <property type="entry name" value="ACT-like"/>
    <property type="match status" value="1"/>
</dbReference>
<dbReference type="SUPFAM" id="SSF47598">
    <property type="entry name" value="Ribbon-helix-helix"/>
    <property type="match status" value="1"/>
</dbReference>
<organism>
    <name type="scientific">Enterobacter sp. (strain 638)</name>
    <dbReference type="NCBI Taxonomy" id="399742"/>
    <lineage>
        <taxon>Bacteria</taxon>
        <taxon>Pseudomonadati</taxon>
        <taxon>Pseudomonadota</taxon>
        <taxon>Gammaproteobacteria</taxon>
        <taxon>Enterobacterales</taxon>
        <taxon>Enterobacteriaceae</taxon>
        <taxon>Enterobacter</taxon>
    </lineage>
</organism>
<accession>A4W9Y8</accession>
<protein>
    <recommendedName>
        <fullName evidence="1">Nickel-responsive regulator</fullName>
    </recommendedName>
</protein>
<proteinExistence type="inferred from homology"/>